<accession>Q9D244</accession>
<accession>A2RTT6</accession>
<accession>Q6QDX5</accession>
<feature type="signal peptide" evidence="5">
    <location>
        <begin position="1"/>
        <end position="27"/>
    </location>
</feature>
<feature type="chain" id="PRO_0000030900" description="Ribonuclease K6">
    <location>
        <begin position="28"/>
        <end position="153"/>
    </location>
</feature>
<feature type="active site" description="Proton acceptor" evidence="2">
    <location>
        <position position="41"/>
    </location>
</feature>
<feature type="active site" description="Proton donor" evidence="2">
    <location>
        <position position="148"/>
    </location>
</feature>
<feature type="binding site" evidence="1">
    <location>
        <begin position="64"/>
        <end position="68"/>
    </location>
    <ligand>
        <name>substrate</name>
    </ligand>
</feature>
<feature type="binding site" evidence="1">
    <location>
        <position position="89"/>
    </location>
    <ligand>
        <name>substrate</name>
    </ligand>
</feature>
<feature type="site" description="Facilitates cleavage of polynucleotide substrates" evidence="3">
    <location>
        <position position="62"/>
    </location>
</feature>
<feature type="site" description="Critical for catalytic activity" evidence="4">
    <location>
        <position position="64"/>
    </location>
</feature>
<feature type="glycosylation site" description="N-linked (GlcNAc...) asparagine" evidence="5">
    <location>
        <position position="58"/>
    </location>
</feature>
<feature type="glycosylation site" description="N-linked (GlcNAc...) asparagine" evidence="5">
    <location>
        <position position="85"/>
    </location>
</feature>
<feature type="disulfide bond" evidence="3">
    <location>
        <begin position="49"/>
        <end position="107"/>
    </location>
</feature>
<feature type="disulfide bond" evidence="3">
    <location>
        <begin position="63"/>
        <end position="117"/>
    </location>
</feature>
<feature type="disulfide bond" evidence="3">
    <location>
        <begin position="81"/>
        <end position="132"/>
    </location>
</feature>
<feature type="disulfide bond" evidence="3">
    <location>
        <begin position="88"/>
        <end position="95"/>
    </location>
</feature>
<feature type="sequence conflict" description="In Ref. 2; BAB32143." evidence="8" ref="2">
    <original>I</original>
    <variation>V</variation>
    <location>
        <position position="42"/>
    </location>
</feature>
<organism>
    <name type="scientific">Mus musculus</name>
    <name type="common">Mouse</name>
    <dbReference type="NCBI Taxonomy" id="10090"/>
    <lineage>
        <taxon>Eukaryota</taxon>
        <taxon>Metazoa</taxon>
        <taxon>Chordata</taxon>
        <taxon>Craniata</taxon>
        <taxon>Vertebrata</taxon>
        <taxon>Euteleostomi</taxon>
        <taxon>Mammalia</taxon>
        <taxon>Eutheria</taxon>
        <taxon>Euarchontoglires</taxon>
        <taxon>Glires</taxon>
        <taxon>Rodentia</taxon>
        <taxon>Myomorpha</taxon>
        <taxon>Muroidea</taxon>
        <taxon>Muridae</taxon>
        <taxon>Murinae</taxon>
        <taxon>Mus</taxon>
        <taxon>Mus</taxon>
    </lineage>
</organism>
<comment type="function">
    <text evidence="3 6 7">Ribonuclease which shows a preference for the pyrimidines uridine and cytosine (PubMed:15693621). Has potent antibacterial activity against a range of Gram-positive and Gram-negative bacteria, including P.aeruginosa, A.baumanii, M.luteus, S.aureus, E.faecalis, E.faecium, S.saprophyticus and E.coli (PubMed:15693621, PubMed:25075772). Causes loss of bacterial membrane integrity, and also promotes agglutination of Gram-negative bacteria (By similarity). Probably contributes to urinary tract sterility (PubMed:25075772). Bactericidal activity is independent of RNase activity (By similarity).</text>
</comment>
<comment type="biophysicochemical properties">
    <kinetics>
        <KM evidence="6">2.1 uM for tRNA</KM>
    </kinetics>
</comment>
<comment type="subunit">
    <text evidence="3">Interacts (via N-terminus) with bacterial lipopolysaccharide (LPS).</text>
</comment>
<comment type="subcellular location">
    <subcellularLocation>
        <location evidence="7">Secreted</location>
    </subcellularLocation>
    <subcellularLocation>
        <location evidence="9">Lysosome</location>
    </subcellularLocation>
    <subcellularLocation>
        <location evidence="7">Cytoplasmic granule</location>
    </subcellularLocation>
</comment>
<comment type="tissue specificity">
    <text evidence="6">Highly expressed in spleen (at protein level) (PubMed:15693621, PubMed:25075772). Has little or no expression in healthy kidneys (at protein level) (PubMed:25075772). Detected at high levels in infected kidneys (at protein level) (PubMed:25075772). Expressed at low levels in bladder (PubMed:15693621, PubMed:25075772). Also detected in skeletal muscle, heart and bone marrow (PubMed:15693621).</text>
</comment>
<comment type="induction">
    <text evidence="7">Up-regulated in bone marrow derived macrophages in response to the uropathogenic E.coli strain CFT073.</text>
</comment>
<comment type="similarity">
    <text evidence="8">Belongs to the pancreatic ribonuclease family.</text>
</comment>
<dbReference type="EC" id="3.1.27.-" evidence="6"/>
<dbReference type="EMBL" id="AY545655">
    <property type="protein sequence ID" value="AAS48640.1"/>
    <property type="molecule type" value="mRNA"/>
</dbReference>
<dbReference type="EMBL" id="AK020595">
    <property type="protein sequence ID" value="BAB32143.1"/>
    <property type="molecule type" value="mRNA"/>
</dbReference>
<dbReference type="EMBL" id="BC094892">
    <property type="protein sequence ID" value="AAH94892.1"/>
    <property type="molecule type" value="mRNA"/>
</dbReference>
<dbReference type="EMBL" id="BC132632">
    <property type="protein sequence ID" value="AAI32633.1"/>
    <property type="molecule type" value="mRNA"/>
</dbReference>
<dbReference type="CCDS" id="CCDS27037.1"/>
<dbReference type="RefSeq" id="NP_084374.2">
    <property type="nucleotide sequence ID" value="NM_030098.2"/>
</dbReference>
<dbReference type="RefSeq" id="XP_006519761.1">
    <property type="nucleotide sequence ID" value="XM_006519698.2"/>
</dbReference>
<dbReference type="SMR" id="Q9D244"/>
<dbReference type="FunCoup" id="Q9D244">
    <property type="interactions" value="72"/>
</dbReference>
<dbReference type="STRING" id="10090.ENSMUSP00000154125"/>
<dbReference type="GlyCosmos" id="Q9D244">
    <property type="glycosylation" value="2 sites, No reported glycans"/>
</dbReference>
<dbReference type="GlyGen" id="Q9D244">
    <property type="glycosylation" value="2 sites"/>
</dbReference>
<dbReference type="PaxDb" id="10090-ENSMUSP00000093613"/>
<dbReference type="ProteomicsDB" id="260985"/>
<dbReference type="DNASU" id="78416"/>
<dbReference type="GeneID" id="78416"/>
<dbReference type="KEGG" id="mmu:78416"/>
<dbReference type="AGR" id="MGI:1925666"/>
<dbReference type="CTD" id="6039"/>
<dbReference type="MGI" id="MGI:1925666">
    <property type="gene designation" value="Rnase6"/>
</dbReference>
<dbReference type="eggNOG" id="ENOG502TDZ3">
    <property type="taxonomic scope" value="Eukaryota"/>
</dbReference>
<dbReference type="InParanoid" id="Q9D244"/>
<dbReference type="OrthoDB" id="9445034at2759"/>
<dbReference type="PhylomeDB" id="Q9D244"/>
<dbReference type="Reactome" id="R-MMU-6803157">
    <property type="pathway name" value="Antimicrobial peptides"/>
</dbReference>
<dbReference type="BioGRID-ORCS" id="78416">
    <property type="hits" value="1 hit in 76 CRISPR screens"/>
</dbReference>
<dbReference type="ChiTaRS" id="Rnase6">
    <property type="organism name" value="mouse"/>
</dbReference>
<dbReference type="PRO" id="PR:Q9D244"/>
<dbReference type="Proteomes" id="UP000000589">
    <property type="component" value="Unplaced"/>
</dbReference>
<dbReference type="RNAct" id="Q9D244">
    <property type="molecule type" value="protein"/>
</dbReference>
<dbReference type="GO" id="GO:0005615">
    <property type="term" value="C:extracellular space"/>
    <property type="evidence" value="ECO:0000314"/>
    <property type="project" value="UniProtKB"/>
</dbReference>
<dbReference type="GO" id="GO:0005764">
    <property type="term" value="C:lysosome"/>
    <property type="evidence" value="ECO:0007669"/>
    <property type="project" value="UniProtKB-SubCell"/>
</dbReference>
<dbReference type="GO" id="GO:0004519">
    <property type="term" value="F:endonuclease activity"/>
    <property type="evidence" value="ECO:0007669"/>
    <property type="project" value="UniProtKB-KW"/>
</dbReference>
<dbReference type="GO" id="GO:0003676">
    <property type="term" value="F:nucleic acid binding"/>
    <property type="evidence" value="ECO:0007669"/>
    <property type="project" value="InterPro"/>
</dbReference>
<dbReference type="GO" id="GO:0019731">
    <property type="term" value="P:antibacterial humoral response"/>
    <property type="evidence" value="ECO:0000314"/>
    <property type="project" value="UniProtKB"/>
</dbReference>
<dbReference type="GO" id="GO:0061844">
    <property type="term" value="P:antimicrobial humoral immune response mediated by antimicrobial peptide"/>
    <property type="evidence" value="ECO:0000314"/>
    <property type="project" value="UniProtKB"/>
</dbReference>
<dbReference type="GO" id="GO:0050829">
    <property type="term" value="P:defense response to Gram-negative bacterium"/>
    <property type="evidence" value="ECO:0000314"/>
    <property type="project" value="UniProtKB"/>
</dbReference>
<dbReference type="GO" id="GO:0050830">
    <property type="term" value="P:defense response to Gram-positive bacterium"/>
    <property type="evidence" value="ECO:0000314"/>
    <property type="project" value="UniProtKB"/>
</dbReference>
<dbReference type="GO" id="GO:0045087">
    <property type="term" value="P:innate immune response"/>
    <property type="evidence" value="ECO:0000314"/>
    <property type="project" value="UniProtKB"/>
</dbReference>
<dbReference type="CDD" id="cd06265">
    <property type="entry name" value="RNase_A_canonical"/>
    <property type="match status" value="1"/>
</dbReference>
<dbReference type="FunFam" id="3.10.130.10:FF:000001">
    <property type="entry name" value="Ribonuclease pancreatic"/>
    <property type="match status" value="1"/>
</dbReference>
<dbReference type="Gene3D" id="3.10.130.10">
    <property type="entry name" value="Ribonuclease A-like domain"/>
    <property type="match status" value="1"/>
</dbReference>
<dbReference type="InterPro" id="IPR001427">
    <property type="entry name" value="RNaseA"/>
</dbReference>
<dbReference type="InterPro" id="IPR036816">
    <property type="entry name" value="RNaseA-like_dom_sf"/>
</dbReference>
<dbReference type="InterPro" id="IPR023411">
    <property type="entry name" value="RNaseA_AS"/>
</dbReference>
<dbReference type="InterPro" id="IPR023412">
    <property type="entry name" value="RNaseA_domain"/>
</dbReference>
<dbReference type="PANTHER" id="PTHR11437">
    <property type="entry name" value="RIBONUCLEASE"/>
    <property type="match status" value="1"/>
</dbReference>
<dbReference type="PANTHER" id="PTHR11437:SF4">
    <property type="entry name" value="RIBONUCLEASE K6"/>
    <property type="match status" value="1"/>
</dbReference>
<dbReference type="Pfam" id="PF00074">
    <property type="entry name" value="RnaseA"/>
    <property type="match status" value="1"/>
</dbReference>
<dbReference type="PRINTS" id="PR00794">
    <property type="entry name" value="RIBONUCLEASE"/>
</dbReference>
<dbReference type="SMART" id="SM00092">
    <property type="entry name" value="RNAse_Pc"/>
    <property type="match status" value="1"/>
</dbReference>
<dbReference type="SUPFAM" id="SSF54076">
    <property type="entry name" value="RNase A-like"/>
    <property type="match status" value="1"/>
</dbReference>
<dbReference type="PROSITE" id="PS00127">
    <property type="entry name" value="RNASE_PANCREATIC"/>
    <property type="match status" value="1"/>
</dbReference>
<proteinExistence type="evidence at protein level"/>
<keyword id="KW-0044">Antibiotic</keyword>
<keyword id="KW-0929">Antimicrobial</keyword>
<keyword id="KW-1015">Disulfide bond</keyword>
<keyword id="KW-0255">Endonuclease</keyword>
<keyword id="KW-0325">Glycoprotein</keyword>
<keyword id="KW-0378">Hydrolase</keyword>
<keyword id="KW-0458">Lysosome</keyword>
<keyword id="KW-0540">Nuclease</keyword>
<keyword id="KW-1185">Reference proteome</keyword>
<keyword id="KW-0964">Secreted</keyword>
<keyword id="KW-0732">Signal</keyword>
<gene>
    <name type="primary">Rnase6</name>
</gene>
<name>RNAS6_MOUSE</name>
<evidence type="ECO:0000250" key="1"/>
<evidence type="ECO:0000250" key="2">
    <source>
        <dbReference type="UniProtKB" id="Q64438"/>
    </source>
</evidence>
<evidence type="ECO:0000250" key="3">
    <source>
        <dbReference type="UniProtKB" id="Q93091"/>
    </source>
</evidence>
<evidence type="ECO:0000250" key="4">
    <source>
        <dbReference type="UniProtKB" id="Q9H1E1"/>
    </source>
</evidence>
<evidence type="ECO:0000255" key="5"/>
<evidence type="ECO:0000269" key="6">
    <source>
    </source>
</evidence>
<evidence type="ECO:0000269" key="7">
    <source>
    </source>
</evidence>
<evidence type="ECO:0000305" key="8"/>
<evidence type="ECO:0000305" key="9">
    <source>
    </source>
</evidence>
<sequence>MVVDLPRYLPLLLLLELWEPMYLLCSQPKGLSRAHWFEIQHIQTSRQPCNTAMRGVNNYTQHCKQINTFLHESFQNVAATCSLHNITCKNGRKNCHESAEPVKMTDCSHTGGAYPNCRYSSDKQYKFFIVACEHPKKEDPPYQLVPVHLDKIV</sequence>
<reference key="1">
    <citation type="journal article" date="2004" name="J. Mol. Evol.">
        <title>Isolation, characterization, and evolutionary divergence of mouse RNase 6: evidence for unusual evolution in rodents.</title>
        <authorList>
            <person name="Dyer K.D."/>
            <person name="Rosenberg H.F."/>
            <person name="Zhang J."/>
        </authorList>
    </citation>
    <scope>NUCLEOTIDE SEQUENCE [MRNA]</scope>
    <scope>CATALYTIC ACTIVITY</scope>
    <scope>BIOPHYSICOCHEMICAL PROPERTIES</scope>
    <scope>TISSUE SPECIFICITY</scope>
</reference>
<reference key="2">
    <citation type="journal article" date="2005" name="Science">
        <title>The transcriptional landscape of the mammalian genome.</title>
        <authorList>
            <person name="Carninci P."/>
            <person name="Kasukawa T."/>
            <person name="Katayama S."/>
            <person name="Gough J."/>
            <person name="Frith M.C."/>
            <person name="Maeda N."/>
            <person name="Oyama R."/>
            <person name="Ravasi T."/>
            <person name="Lenhard B."/>
            <person name="Wells C."/>
            <person name="Kodzius R."/>
            <person name="Shimokawa K."/>
            <person name="Bajic V.B."/>
            <person name="Brenner S.E."/>
            <person name="Batalov S."/>
            <person name="Forrest A.R."/>
            <person name="Zavolan M."/>
            <person name="Davis M.J."/>
            <person name="Wilming L.G."/>
            <person name="Aidinis V."/>
            <person name="Allen J.E."/>
            <person name="Ambesi-Impiombato A."/>
            <person name="Apweiler R."/>
            <person name="Aturaliya R.N."/>
            <person name="Bailey T.L."/>
            <person name="Bansal M."/>
            <person name="Baxter L."/>
            <person name="Beisel K.W."/>
            <person name="Bersano T."/>
            <person name="Bono H."/>
            <person name="Chalk A.M."/>
            <person name="Chiu K.P."/>
            <person name="Choudhary V."/>
            <person name="Christoffels A."/>
            <person name="Clutterbuck D.R."/>
            <person name="Crowe M.L."/>
            <person name="Dalla E."/>
            <person name="Dalrymple B.P."/>
            <person name="de Bono B."/>
            <person name="Della Gatta G."/>
            <person name="di Bernardo D."/>
            <person name="Down T."/>
            <person name="Engstrom P."/>
            <person name="Fagiolini M."/>
            <person name="Faulkner G."/>
            <person name="Fletcher C.F."/>
            <person name="Fukushima T."/>
            <person name="Furuno M."/>
            <person name="Futaki S."/>
            <person name="Gariboldi M."/>
            <person name="Georgii-Hemming P."/>
            <person name="Gingeras T.R."/>
            <person name="Gojobori T."/>
            <person name="Green R.E."/>
            <person name="Gustincich S."/>
            <person name="Harbers M."/>
            <person name="Hayashi Y."/>
            <person name="Hensch T.K."/>
            <person name="Hirokawa N."/>
            <person name="Hill D."/>
            <person name="Huminiecki L."/>
            <person name="Iacono M."/>
            <person name="Ikeo K."/>
            <person name="Iwama A."/>
            <person name="Ishikawa T."/>
            <person name="Jakt M."/>
            <person name="Kanapin A."/>
            <person name="Katoh M."/>
            <person name="Kawasawa Y."/>
            <person name="Kelso J."/>
            <person name="Kitamura H."/>
            <person name="Kitano H."/>
            <person name="Kollias G."/>
            <person name="Krishnan S.P."/>
            <person name="Kruger A."/>
            <person name="Kummerfeld S.K."/>
            <person name="Kurochkin I.V."/>
            <person name="Lareau L.F."/>
            <person name="Lazarevic D."/>
            <person name="Lipovich L."/>
            <person name="Liu J."/>
            <person name="Liuni S."/>
            <person name="McWilliam S."/>
            <person name="Madan Babu M."/>
            <person name="Madera M."/>
            <person name="Marchionni L."/>
            <person name="Matsuda H."/>
            <person name="Matsuzawa S."/>
            <person name="Miki H."/>
            <person name="Mignone F."/>
            <person name="Miyake S."/>
            <person name="Morris K."/>
            <person name="Mottagui-Tabar S."/>
            <person name="Mulder N."/>
            <person name="Nakano N."/>
            <person name="Nakauchi H."/>
            <person name="Ng P."/>
            <person name="Nilsson R."/>
            <person name="Nishiguchi S."/>
            <person name="Nishikawa S."/>
            <person name="Nori F."/>
            <person name="Ohara O."/>
            <person name="Okazaki Y."/>
            <person name="Orlando V."/>
            <person name="Pang K.C."/>
            <person name="Pavan W.J."/>
            <person name="Pavesi G."/>
            <person name="Pesole G."/>
            <person name="Petrovsky N."/>
            <person name="Piazza S."/>
            <person name="Reed J."/>
            <person name="Reid J.F."/>
            <person name="Ring B.Z."/>
            <person name="Ringwald M."/>
            <person name="Rost B."/>
            <person name="Ruan Y."/>
            <person name="Salzberg S.L."/>
            <person name="Sandelin A."/>
            <person name="Schneider C."/>
            <person name="Schoenbach C."/>
            <person name="Sekiguchi K."/>
            <person name="Semple C.A."/>
            <person name="Seno S."/>
            <person name="Sessa L."/>
            <person name="Sheng Y."/>
            <person name="Shibata Y."/>
            <person name="Shimada H."/>
            <person name="Shimada K."/>
            <person name="Silva D."/>
            <person name="Sinclair B."/>
            <person name="Sperling S."/>
            <person name="Stupka E."/>
            <person name="Sugiura K."/>
            <person name="Sultana R."/>
            <person name="Takenaka Y."/>
            <person name="Taki K."/>
            <person name="Tammoja K."/>
            <person name="Tan S.L."/>
            <person name="Tang S."/>
            <person name="Taylor M.S."/>
            <person name="Tegner J."/>
            <person name="Teichmann S.A."/>
            <person name="Ueda H.R."/>
            <person name="van Nimwegen E."/>
            <person name="Verardo R."/>
            <person name="Wei C.L."/>
            <person name="Yagi K."/>
            <person name="Yamanishi H."/>
            <person name="Zabarovsky E."/>
            <person name="Zhu S."/>
            <person name="Zimmer A."/>
            <person name="Hide W."/>
            <person name="Bult C."/>
            <person name="Grimmond S.M."/>
            <person name="Teasdale R.D."/>
            <person name="Liu E.T."/>
            <person name="Brusic V."/>
            <person name="Quackenbush J."/>
            <person name="Wahlestedt C."/>
            <person name="Mattick J.S."/>
            <person name="Hume D.A."/>
            <person name="Kai C."/>
            <person name="Sasaki D."/>
            <person name="Tomaru Y."/>
            <person name="Fukuda S."/>
            <person name="Kanamori-Katayama M."/>
            <person name="Suzuki M."/>
            <person name="Aoki J."/>
            <person name="Arakawa T."/>
            <person name="Iida J."/>
            <person name="Imamura K."/>
            <person name="Itoh M."/>
            <person name="Kato T."/>
            <person name="Kawaji H."/>
            <person name="Kawagashira N."/>
            <person name="Kawashima T."/>
            <person name="Kojima M."/>
            <person name="Kondo S."/>
            <person name="Konno H."/>
            <person name="Nakano K."/>
            <person name="Ninomiya N."/>
            <person name="Nishio T."/>
            <person name="Okada M."/>
            <person name="Plessy C."/>
            <person name="Shibata K."/>
            <person name="Shiraki T."/>
            <person name="Suzuki S."/>
            <person name="Tagami M."/>
            <person name="Waki K."/>
            <person name="Watahiki A."/>
            <person name="Okamura-Oho Y."/>
            <person name="Suzuki H."/>
            <person name="Kawai J."/>
            <person name="Hayashizaki Y."/>
        </authorList>
    </citation>
    <scope>NUCLEOTIDE SEQUENCE [LARGE SCALE MRNA]</scope>
    <source>
        <strain>C57BL/6J</strain>
        <tissue>Urinary bladder</tissue>
    </source>
</reference>
<reference key="3">
    <citation type="journal article" date="2004" name="Genome Res.">
        <title>The status, quality, and expansion of the NIH full-length cDNA project: the Mammalian Gene Collection (MGC).</title>
        <authorList>
            <consortium name="The MGC Project Team"/>
        </authorList>
    </citation>
    <scope>NUCLEOTIDE SEQUENCE [LARGE SCALE MRNA]</scope>
    <source>
        <tissue>Brain</tissue>
        <tissue>Pancreas</tissue>
    </source>
</reference>
<reference key="4">
    <citation type="journal article" date="2015" name="Kidney Int.">
        <title>Ribonucleases 6 and 7 have antimicrobial function in the human and murine urinary tract.</title>
        <authorList>
            <person name="Becknell B."/>
            <person name="Eichler T.E."/>
            <person name="Beceiro S."/>
            <person name="Li B."/>
            <person name="Easterling R.S."/>
            <person name="Carpenter A.R."/>
            <person name="James C.L."/>
            <person name="McHugh K.M."/>
            <person name="Hains D.S."/>
            <person name="Partida-Sanchez S."/>
            <person name="Spencer J.D."/>
        </authorList>
    </citation>
    <scope>FUNCTION</scope>
    <scope>SUBCELLULAR LOCATION</scope>
    <scope>TISSUE SPECIFICITY</scope>
    <scope>INDUCTION</scope>
</reference>
<protein>
    <recommendedName>
        <fullName>Ribonuclease K6</fullName>
        <shortName>RNase K6</shortName>
        <ecNumber evidence="6">3.1.27.-</ecNumber>
    </recommendedName>
</protein>